<accession>C3LR55</accession>
<name>MURA_VIBCM</name>
<sequence length="419" mass="44686">MEKFRVIGSTQPLQGEVTISGAKNAALPILFASILAEEPVEVANVPHLRDIDTTMELLERLGAKVERNGSVHVDAGPINQYCAPYDLVKTMRASIWALGPLVARFGQGQVSLPGGCAIGARPVDLHIHGLEQLGATITLEDGYVKAHVDGRLQGAHIVMDKVSVGATITIMCAATLAEGTTVLDNAAREPEIVDTAMFLNKLGAKISGAGTDSITIEGVERLGGGKHAVVPDRIETGTFLVAAAVSRGKIVCRNTHAHLLEAVLAKLEEAGAEIECGEDWISLDMTGRELKAVTVRTAPHPGFPTDMQAQFTLLNMMAKGGGVITETIFENRFMHVPELKRMGAKAEIEGNTVICGDVDRLSGAQVMATDLRASASLVIAGCIAKGETIVDRIYHIDRGYERIEDKLSALGANIERFRD</sequence>
<protein>
    <recommendedName>
        <fullName evidence="1">UDP-N-acetylglucosamine 1-carboxyvinyltransferase</fullName>
        <ecNumber evidence="1">2.5.1.7</ecNumber>
    </recommendedName>
    <alternativeName>
        <fullName evidence="1">Enoylpyruvate transferase</fullName>
    </alternativeName>
    <alternativeName>
        <fullName evidence="1">UDP-N-acetylglucosamine enolpyruvyl transferase</fullName>
        <shortName evidence="1">EPT</shortName>
    </alternativeName>
</protein>
<organism>
    <name type="scientific">Vibrio cholerae serotype O1 (strain M66-2)</name>
    <dbReference type="NCBI Taxonomy" id="579112"/>
    <lineage>
        <taxon>Bacteria</taxon>
        <taxon>Pseudomonadati</taxon>
        <taxon>Pseudomonadota</taxon>
        <taxon>Gammaproteobacteria</taxon>
        <taxon>Vibrionales</taxon>
        <taxon>Vibrionaceae</taxon>
        <taxon>Vibrio</taxon>
    </lineage>
</organism>
<comment type="function">
    <text evidence="1">Cell wall formation. Adds enolpyruvyl to UDP-N-acetylglucosamine.</text>
</comment>
<comment type="catalytic activity">
    <reaction evidence="1">
        <text>phosphoenolpyruvate + UDP-N-acetyl-alpha-D-glucosamine = UDP-N-acetyl-3-O-(1-carboxyvinyl)-alpha-D-glucosamine + phosphate</text>
        <dbReference type="Rhea" id="RHEA:18681"/>
        <dbReference type="ChEBI" id="CHEBI:43474"/>
        <dbReference type="ChEBI" id="CHEBI:57705"/>
        <dbReference type="ChEBI" id="CHEBI:58702"/>
        <dbReference type="ChEBI" id="CHEBI:68483"/>
        <dbReference type="EC" id="2.5.1.7"/>
    </reaction>
</comment>
<comment type="pathway">
    <text evidence="1">Cell wall biogenesis; peptidoglycan biosynthesis.</text>
</comment>
<comment type="subcellular location">
    <subcellularLocation>
        <location evidence="1">Cytoplasm</location>
    </subcellularLocation>
</comment>
<comment type="similarity">
    <text evidence="1">Belongs to the EPSP synthase family. MurA subfamily.</text>
</comment>
<keyword id="KW-0131">Cell cycle</keyword>
<keyword id="KW-0132">Cell division</keyword>
<keyword id="KW-0133">Cell shape</keyword>
<keyword id="KW-0961">Cell wall biogenesis/degradation</keyword>
<keyword id="KW-0963">Cytoplasm</keyword>
<keyword id="KW-0573">Peptidoglycan synthesis</keyword>
<keyword id="KW-0670">Pyruvate</keyword>
<keyword id="KW-0808">Transferase</keyword>
<feature type="chain" id="PRO_1000119126" description="UDP-N-acetylglucosamine 1-carboxyvinyltransferase">
    <location>
        <begin position="1"/>
        <end position="419"/>
    </location>
</feature>
<feature type="active site" description="Proton donor" evidence="1">
    <location>
        <position position="116"/>
    </location>
</feature>
<feature type="binding site" evidence="1">
    <location>
        <begin position="23"/>
        <end position="24"/>
    </location>
    <ligand>
        <name>phosphoenolpyruvate</name>
        <dbReference type="ChEBI" id="CHEBI:58702"/>
    </ligand>
</feature>
<feature type="binding site" evidence="1">
    <location>
        <position position="92"/>
    </location>
    <ligand>
        <name>UDP-N-acetyl-alpha-D-glucosamine</name>
        <dbReference type="ChEBI" id="CHEBI:57705"/>
    </ligand>
</feature>
<feature type="binding site" evidence="1">
    <location>
        <begin position="121"/>
        <end position="125"/>
    </location>
    <ligand>
        <name>UDP-N-acetyl-alpha-D-glucosamine</name>
        <dbReference type="ChEBI" id="CHEBI:57705"/>
    </ligand>
</feature>
<feature type="binding site" evidence="1">
    <location>
        <begin position="161"/>
        <end position="164"/>
    </location>
    <ligand>
        <name>UDP-N-acetyl-alpha-D-glucosamine</name>
        <dbReference type="ChEBI" id="CHEBI:57705"/>
    </ligand>
</feature>
<feature type="binding site" evidence="1">
    <location>
        <position position="306"/>
    </location>
    <ligand>
        <name>UDP-N-acetyl-alpha-D-glucosamine</name>
        <dbReference type="ChEBI" id="CHEBI:57705"/>
    </ligand>
</feature>
<feature type="binding site" evidence="1">
    <location>
        <position position="328"/>
    </location>
    <ligand>
        <name>UDP-N-acetyl-alpha-D-glucosamine</name>
        <dbReference type="ChEBI" id="CHEBI:57705"/>
    </ligand>
</feature>
<feature type="modified residue" description="2-(S-cysteinyl)pyruvic acid O-phosphothioketal" evidence="1">
    <location>
        <position position="116"/>
    </location>
</feature>
<gene>
    <name evidence="1" type="primary">murA</name>
    <name type="ordered locus">VCM66_2436</name>
</gene>
<reference key="1">
    <citation type="journal article" date="2008" name="PLoS ONE">
        <title>A recalibrated molecular clock and independent origins for the cholera pandemic clones.</title>
        <authorList>
            <person name="Feng L."/>
            <person name="Reeves P.R."/>
            <person name="Lan R."/>
            <person name="Ren Y."/>
            <person name="Gao C."/>
            <person name="Zhou Z."/>
            <person name="Ren Y."/>
            <person name="Cheng J."/>
            <person name="Wang W."/>
            <person name="Wang J."/>
            <person name="Qian W."/>
            <person name="Li D."/>
            <person name="Wang L."/>
        </authorList>
    </citation>
    <scope>NUCLEOTIDE SEQUENCE [LARGE SCALE GENOMIC DNA]</scope>
    <source>
        <strain>M66-2</strain>
    </source>
</reference>
<evidence type="ECO:0000255" key="1">
    <source>
        <dbReference type="HAMAP-Rule" id="MF_00111"/>
    </source>
</evidence>
<dbReference type="EC" id="2.5.1.7" evidence="1"/>
<dbReference type="EMBL" id="CP001233">
    <property type="protein sequence ID" value="ACP06733.1"/>
    <property type="molecule type" value="Genomic_DNA"/>
</dbReference>
<dbReference type="RefSeq" id="WP_000410586.1">
    <property type="nucleotide sequence ID" value="NC_012578.1"/>
</dbReference>
<dbReference type="SMR" id="C3LR55"/>
<dbReference type="GeneID" id="69718877"/>
<dbReference type="KEGG" id="vcm:VCM66_2436"/>
<dbReference type="HOGENOM" id="CLU_027387_0_0_6"/>
<dbReference type="UniPathway" id="UPA00219"/>
<dbReference type="Proteomes" id="UP000001217">
    <property type="component" value="Chromosome I"/>
</dbReference>
<dbReference type="GO" id="GO:0005737">
    <property type="term" value="C:cytoplasm"/>
    <property type="evidence" value="ECO:0007669"/>
    <property type="project" value="UniProtKB-SubCell"/>
</dbReference>
<dbReference type="GO" id="GO:0008760">
    <property type="term" value="F:UDP-N-acetylglucosamine 1-carboxyvinyltransferase activity"/>
    <property type="evidence" value="ECO:0007669"/>
    <property type="project" value="UniProtKB-UniRule"/>
</dbReference>
<dbReference type="GO" id="GO:0051301">
    <property type="term" value="P:cell division"/>
    <property type="evidence" value="ECO:0007669"/>
    <property type="project" value="UniProtKB-KW"/>
</dbReference>
<dbReference type="GO" id="GO:0071555">
    <property type="term" value="P:cell wall organization"/>
    <property type="evidence" value="ECO:0007669"/>
    <property type="project" value="UniProtKB-KW"/>
</dbReference>
<dbReference type="GO" id="GO:0009252">
    <property type="term" value="P:peptidoglycan biosynthetic process"/>
    <property type="evidence" value="ECO:0007669"/>
    <property type="project" value="UniProtKB-UniRule"/>
</dbReference>
<dbReference type="GO" id="GO:0008360">
    <property type="term" value="P:regulation of cell shape"/>
    <property type="evidence" value="ECO:0007669"/>
    <property type="project" value="UniProtKB-KW"/>
</dbReference>
<dbReference type="GO" id="GO:0019277">
    <property type="term" value="P:UDP-N-acetylgalactosamine biosynthetic process"/>
    <property type="evidence" value="ECO:0007669"/>
    <property type="project" value="InterPro"/>
</dbReference>
<dbReference type="CDD" id="cd01555">
    <property type="entry name" value="UdpNAET"/>
    <property type="match status" value="1"/>
</dbReference>
<dbReference type="FunFam" id="3.65.10.10:FF:000002">
    <property type="entry name" value="UDP-N-acetylglucosamine 1-carboxyvinyltransferase"/>
    <property type="match status" value="1"/>
</dbReference>
<dbReference type="Gene3D" id="3.65.10.10">
    <property type="entry name" value="Enolpyruvate transferase domain"/>
    <property type="match status" value="2"/>
</dbReference>
<dbReference type="HAMAP" id="MF_00111">
    <property type="entry name" value="MurA"/>
    <property type="match status" value="1"/>
</dbReference>
<dbReference type="InterPro" id="IPR001986">
    <property type="entry name" value="Enolpyruvate_Tfrase_dom"/>
</dbReference>
<dbReference type="InterPro" id="IPR036968">
    <property type="entry name" value="Enolpyruvate_Tfrase_sf"/>
</dbReference>
<dbReference type="InterPro" id="IPR050068">
    <property type="entry name" value="MurA_subfamily"/>
</dbReference>
<dbReference type="InterPro" id="IPR013792">
    <property type="entry name" value="RNA3'P_cycl/enolpyr_Trfase_a/b"/>
</dbReference>
<dbReference type="InterPro" id="IPR005750">
    <property type="entry name" value="UDP_GlcNAc_COvinyl_MurA"/>
</dbReference>
<dbReference type="NCBIfam" id="TIGR01072">
    <property type="entry name" value="murA"/>
    <property type="match status" value="1"/>
</dbReference>
<dbReference type="NCBIfam" id="NF006873">
    <property type="entry name" value="PRK09369.1"/>
    <property type="match status" value="1"/>
</dbReference>
<dbReference type="PANTHER" id="PTHR43783">
    <property type="entry name" value="UDP-N-ACETYLGLUCOSAMINE 1-CARBOXYVINYLTRANSFERASE"/>
    <property type="match status" value="1"/>
</dbReference>
<dbReference type="PANTHER" id="PTHR43783:SF1">
    <property type="entry name" value="UDP-N-ACETYLGLUCOSAMINE 1-CARBOXYVINYLTRANSFERASE"/>
    <property type="match status" value="1"/>
</dbReference>
<dbReference type="Pfam" id="PF00275">
    <property type="entry name" value="EPSP_synthase"/>
    <property type="match status" value="1"/>
</dbReference>
<dbReference type="SUPFAM" id="SSF55205">
    <property type="entry name" value="EPT/RTPC-like"/>
    <property type="match status" value="1"/>
</dbReference>
<proteinExistence type="inferred from homology"/>